<organism>
    <name type="scientific">Syntrophomonas wolfei subsp. wolfei (strain DSM 2245B / Goettingen)</name>
    <dbReference type="NCBI Taxonomy" id="335541"/>
    <lineage>
        <taxon>Bacteria</taxon>
        <taxon>Bacillati</taxon>
        <taxon>Bacillota</taxon>
        <taxon>Clostridia</taxon>
        <taxon>Eubacteriales</taxon>
        <taxon>Syntrophomonadaceae</taxon>
        <taxon>Syntrophomonas</taxon>
    </lineage>
</organism>
<evidence type="ECO:0000255" key="1">
    <source>
        <dbReference type="HAMAP-Rule" id="MF_00378"/>
    </source>
</evidence>
<gene>
    <name evidence="1" type="primary">xseA</name>
    <name type="ordered locus">Swol_0567</name>
</gene>
<name>EX7L_SYNWW</name>
<accession>Q0AZF4</accession>
<dbReference type="EC" id="3.1.11.6" evidence="1"/>
<dbReference type="EMBL" id="CP000448">
    <property type="protein sequence ID" value="ABI67900.1"/>
    <property type="molecule type" value="Genomic_DNA"/>
</dbReference>
<dbReference type="RefSeq" id="WP_011640005.1">
    <property type="nucleotide sequence ID" value="NC_008346.1"/>
</dbReference>
<dbReference type="SMR" id="Q0AZF4"/>
<dbReference type="STRING" id="335541.Swol_0567"/>
<dbReference type="DNASU" id="4281408"/>
<dbReference type="KEGG" id="swo:Swol_0567"/>
<dbReference type="eggNOG" id="COG1570">
    <property type="taxonomic scope" value="Bacteria"/>
</dbReference>
<dbReference type="HOGENOM" id="CLU_023625_2_0_9"/>
<dbReference type="OrthoDB" id="9802795at2"/>
<dbReference type="Proteomes" id="UP000001968">
    <property type="component" value="Chromosome"/>
</dbReference>
<dbReference type="GO" id="GO:0005737">
    <property type="term" value="C:cytoplasm"/>
    <property type="evidence" value="ECO:0007669"/>
    <property type="project" value="UniProtKB-SubCell"/>
</dbReference>
<dbReference type="GO" id="GO:0009318">
    <property type="term" value="C:exodeoxyribonuclease VII complex"/>
    <property type="evidence" value="ECO:0007669"/>
    <property type="project" value="InterPro"/>
</dbReference>
<dbReference type="GO" id="GO:0008855">
    <property type="term" value="F:exodeoxyribonuclease VII activity"/>
    <property type="evidence" value="ECO:0007669"/>
    <property type="project" value="UniProtKB-UniRule"/>
</dbReference>
<dbReference type="GO" id="GO:0003676">
    <property type="term" value="F:nucleic acid binding"/>
    <property type="evidence" value="ECO:0007669"/>
    <property type="project" value="InterPro"/>
</dbReference>
<dbReference type="GO" id="GO:0006308">
    <property type="term" value="P:DNA catabolic process"/>
    <property type="evidence" value="ECO:0007669"/>
    <property type="project" value="UniProtKB-UniRule"/>
</dbReference>
<dbReference type="CDD" id="cd04489">
    <property type="entry name" value="ExoVII_LU_OBF"/>
    <property type="match status" value="1"/>
</dbReference>
<dbReference type="HAMAP" id="MF_00378">
    <property type="entry name" value="Exonuc_7_L"/>
    <property type="match status" value="1"/>
</dbReference>
<dbReference type="InterPro" id="IPR003753">
    <property type="entry name" value="Exonuc_VII_L"/>
</dbReference>
<dbReference type="InterPro" id="IPR020579">
    <property type="entry name" value="Exonuc_VII_lsu_C"/>
</dbReference>
<dbReference type="InterPro" id="IPR025824">
    <property type="entry name" value="OB-fold_nuc-bd_dom"/>
</dbReference>
<dbReference type="NCBIfam" id="TIGR00237">
    <property type="entry name" value="xseA"/>
    <property type="match status" value="1"/>
</dbReference>
<dbReference type="PANTHER" id="PTHR30008">
    <property type="entry name" value="EXODEOXYRIBONUCLEASE 7 LARGE SUBUNIT"/>
    <property type="match status" value="1"/>
</dbReference>
<dbReference type="PANTHER" id="PTHR30008:SF0">
    <property type="entry name" value="EXODEOXYRIBONUCLEASE 7 LARGE SUBUNIT"/>
    <property type="match status" value="1"/>
</dbReference>
<dbReference type="Pfam" id="PF02601">
    <property type="entry name" value="Exonuc_VII_L"/>
    <property type="match status" value="2"/>
</dbReference>
<dbReference type="Pfam" id="PF13742">
    <property type="entry name" value="tRNA_anti_2"/>
    <property type="match status" value="1"/>
</dbReference>
<protein>
    <recommendedName>
        <fullName evidence="1">Exodeoxyribonuclease 7 large subunit</fullName>
        <ecNumber evidence="1">3.1.11.6</ecNumber>
    </recommendedName>
    <alternativeName>
        <fullName evidence="1">Exodeoxyribonuclease VII large subunit</fullName>
        <shortName evidence="1">Exonuclease VII large subunit</shortName>
    </alternativeName>
</protein>
<sequence length="405" mass="46034">MKEILTVTELNSYIANLLDSDPFLGQLWLRGEISGFRLYQQSGHMYFTLKDEDSTISAVMFKSRARGLKFKPKDGMEVLLRASVSVFARQGKYQLYVEEMQPYGIGGLFLYLEELKKKLAAKGYFAPERKKAIPAFVQRVGIVTSQDGAALRDICRILKQRHPGVEVVLAHSSVQGSEAPGELAEGLRLLNSYAEVELIIIGRGGGSYEDLMAFNSELVVQAIYESNIPVISAVGHEVDFTLADLVADLRAATPSQAASLAVADMQALSRQLDNYQQRLLRAMQRKLLYYTEIIDRLMMKRIWKQPRSLLHMREELLSQLEKSLSRGMAEIFREKKMKLSMNMAALDSLSPLKIMERGYVLLQKEGRIIRDEQQVQIGDRLEVAMRHADLEIEVIKKERVKRWKS</sequence>
<reference key="1">
    <citation type="journal article" date="2010" name="Environ. Microbiol.">
        <title>The genome of Syntrophomonas wolfei: new insights into syntrophic metabolism and biohydrogen production.</title>
        <authorList>
            <person name="Sieber J.R."/>
            <person name="Sims D.R."/>
            <person name="Han C."/>
            <person name="Kim E."/>
            <person name="Lykidis A."/>
            <person name="Lapidus A.L."/>
            <person name="McDonnald E."/>
            <person name="Rohlin L."/>
            <person name="Culley D.E."/>
            <person name="Gunsalus R."/>
            <person name="McInerney M.J."/>
        </authorList>
    </citation>
    <scope>NUCLEOTIDE SEQUENCE [LARGE SCALE GENOMIC DNA]</scope>
    <source>
        <strain>DSM 2245B / Goettingen</strain>
    </source>
</reference>
<comment type="function">
    <text evidence="1">Bidirectionally degrades single-stranded DNA into large acid-insoluble oligonucleotides, which are then degraded further into small acid-soluble oligonucleotides.</text>
</comment>
<comment type="catalytic activity">
    <reaction evidence="1">
        <text>Exonucleolytic cleavage in either 5'- to 3'- or 3'- to 5'-direction to yield nucleoside 5'-phosphates.</text>
        <dbReference type="EC" id="3.1.11.6"/>
    </reaction>
</comment>
<comment type="subunit">
    <text evidence="1">Heterooligomer composed of large and small subunits.</text>
</comment>
<comment type="subcellular location">
    <subcellularLocation>
        <location evidence="1">Cytoplasm</location>
    </subcellularLocation>
</comment>
<comment type="similarity">
    <text evidence="1">Belongs to the XseA family.</text>
</comment>
<feature type="chain" id="PRO_1000048788" description="Exodeoxyribonuclease 7 large subunit">
    <location>
        <begin position="1"/>
        <end position="405"/>
    </location>
</feature>
<keyword id="KW-0963">Cytoplasm</keyword>
<keyword id="KW-0269">Exonuclease</keyword>
<keyword id="KW-0378">Hydrolase</keyword>
<keyword id="KW-0540">Nuclease</keyword>
<keyword id="KW-1185">Reference proteome</keyword>
<proteinExistence type="inferred from homology"/>